<organism>
    <name type="scientific">Escherichia coli O127:H6 (strain E2348/69 / EPEC)</name>
    <dbReference type="NCBI Taxonomy" id="574521"/>
    <lineage>
        <taxon>Bacteria</taxon>
        <taxon>Pseudomonadati</taxon>
        <taxon>Pseudomonadota</taxon>
        <taxon>Gammaproteobacteria</taxon>
        <taxon>Enterobacterales</taxon>
        <taxon>Enterobacteriaceae</taxon>
        <taxon>Escherichia</taxon>
    </lineage>
</organism>
<protein>
    <recommendedName>
        <fullName evidence="1">Large ribosomal subunit protein uL1</fullName>
    </recommendedName>
    <alternativeName>
        <fullName evidence="2">50S ribosomal protein L1</fullName>
    </alternativeName>
</protein>
<comment type="function">
    <text evidence="1">Binds directly to 23S rRNA. The L1 stalk is quite mobile in the ribosome, and is involved in E site tRNA release.</text>
</comment>
<comment type="function">
    <text evidence="1">Protein L1 is also a translational repressor protein, it controls the translation of the L11 operon by binding to its mRNA.</text>
</comment>
<comment type="subunit">
    <text evidence="1">Part of the 50S ribosomal subunit.</text>
</comment>
<comment type="similarity">
    <text evidence="1">Belongs to the universal ribosomal protein uL1 family.</text>
</comment>
<sequence length="234" mass="24744">MAKLTKRMRVIREKVDATKQYDINEAIALLKELATAKFVESVDVAVNLGIDARKSDQNVRGATVLPHGTGRSVRVAVFTQGANAEAAKAAGAELVGMEDLADQIKKGEMNFDVVIASPDAMRVVGQLGQVLGPRGLMPNPKVGTVTPNVAEAVKNAKAGQIRYRNDKNGIIHTTIGKVDFDADKLKENLEALLVALKKAKPTQAKGVYIKKVSISTTMGAGVAVDQAGLSASVN</sequence>
<proteinExistence type="inferred from homology"/>
<keyword id="KW-1185">Reference proteome</keyword>
<keyword id="KW-0678">Repressor</keyword>
<keyword id="KW-0687">Ribonucleoprotein</keyword>
<keyword id="KW-0689">Ribosomal protein</keyword>
<keyword id="KW-0694">RNA-binding</keyword>
<keyword id="KW-0699">rRNA-binding</keyword>
<keyword id="KW-0810">Translation regulation</keyword>
<keyword id="KW-0820">tRNA-binding</keyword>
<gene>
    <name evidence="1" type="primary">rplA</name>
    <name type="ordered locus">E2348C_4291</name>
</gene>
<reference key="1">
    <citation type="journal article" date="2009" name="J. Bacteriol.">
        <title>Complete genome sequence and comparative genome analysis of enteropathogenic Escherichia coli O127:H6 strain E2348/69.</title>
        <authorList>
            <person name="Iguchi A."/>
            <person name="Thomson N.R."/>
            <person name="Ogura Y."/>
            <person name="Saunders D."/>
            <person name="Ooka T."/>
            <person name="Henderson I.R."/>
            <person name="Harris D."/>
            <person name="Asadulghani M."/>
            <person name="Kurokawa K."/>
            <person name="Dean P."/>
            <person name="Kenny B."/>
            <person name="Quail M.A."/>
            <person name="Thurston S."/>
            <person name="Dougan G."/>
            <person name="Hayashi T."/>
            <person name="Parkhill J."/>
            <person name="Frankel G."/>
        </authorList>
    </citation>
    <scope>NUCLEOTIDE SEQUENCE [LARGE SCALE GENOMIC DNA]</scope>
    <source>
        <strain>E2348/69 / EPEC</strain>
    </source>
</reference>
<feature type="chain" id="PRO_1000165678" description="Large ribosomal subunit protein uL1">
    <location>
        <begin position="1"/>
        <end position="234"/>
    </location>
</feature>
<evidence type="ECO:0000255" key="1">
    <source>
        <dbReference type="HAMAP-Rule" id="MF_01318"/>
    </source>
</evidence>
<evidence type="ECO:0000305" key="2"/>
<accession>B7UPD9</accession>
<dbReference type="EMBL" id="FM180568">
    <property type="protein sequence ID" value="CAS11839.1"/>
    <property type="molecule type" value="Genomic_DNA"/>
</dbReference>
<dbReference type="RefSeq" id="WP_001096680.1">
    <property type="nucleotide sequence ID" value="NC_011601.1"/>
</dbReference>
<dbReference type="SMR" id="B7UPD9"/>
<dbReference type="KEGG" id="ecg:E2348C_4291"/>
<dbReference type="HOGENOM" id="CLU_062853_0_0_6"/>
<dbReference type="Proteomes" id="UP000008205">
    <property type="component" value="Chromosome"/>
</dbReference>
<dbReference type="GO" id="GO:0022625">
    <property type="term" value="C:cytosolic large ribosomal subunit"/>
    <property type="evidence" value="ECO:0007669"/>
    <property type="project" value="TreeGrafter"/>
</dbReference>
<dbReference type="GO" id="GO:0019843">
    <property type="term" value="F:rRNA binding"/>
    <property type="evidence" value="ECO:0007669"/>
    <property type="project" value="UniProtKB-UniRule"/>
</dbReference>
<dbReference type="GO" id="GO:0003735">
    <property type="term" value="F:structural constituent of ribosome"/>
    <property type="evidence" value="ECO:0007669"/>
    <property type="project" value="InterPro"/>
</dbReference>
<dbReference type="GO" id="GO:0000049">
    <property type="term" value="F:tRNA binding"/>
    <property type="evidence" value="ECO:0007669"/>
    <property type="project" value="UniProtKB-KW"/>
</dbReference>
<dbReference type="GO" id="GO:0006417">
    <property type="term" value="P:regulation of translation"/>
    <property type="evidence" value="ECO:0007669"/>
    <property type="project" value="UniProtKB-KW"/>
</dbReference>
<dbReference type="GO" id="GO:0006412">
    <property type="term" value="P:translation"/>
    <property type="evidence" value="ECO:0007669"/>
    <property type="project" value="UniProtKB-UniRule"/>
</dbReference>
<dbReference type="CDD" id="cd00403">
    <property type="entry name" value="Ribosomal_L1"/>
    <property type="match status" value="1"/>
</dbReference>
<dbReference type="FunFam" id="3.40.50.790:FF:000001">
    <property type="entry name" value="50S ribosomal protein L1"/>
    <property type="match status" value="1"/>
</dbReference>
<dbReference type="Gene3D" id="3.30.190.20">
    <property type="match status" value="1"/>
</dbReference>
<dbReference type="Gene3D" id="3.40.50.790">
    <property type="match status" value="1"/>
</dbReference>
<dbReference type="HAMAP" id="MF_01318_B">
    <property type="entry name" value="Ribosomal_uL1_B"/>
    <property type="match status" value="1"/>
</dbReference>
<dbReference type="InterPro" id="IPR005878">
    <property type="entry name" value="Ribosom_uL1_bac-type"/>
</dbReference>
<dbReference type="InterPro" id="IPR002143">
    <property type="entry name" value="Ribosomal_uL1"/>
</dbReference>
<dbReference type="InterPro" id="IPR023674">
    <property type="entry name" value="Ribosomal_uL1-like"/>
</dbReference>
<dbReference type="InterPro" id="IPR028364">
    <property type="entry name" value="Ribosomal_uL1/biogenesis"/>
</dbReference>
<dbReference type="InterPro" id="IPR016095">
    <property type="entry name" value="Ribosomal_uL1_3-a/b-sand"/>
</dbReference>
<dbReference type="InterPro" id="IPR023673">
    <property type="entry name" value="Ribosomal_uL1_CS"/>
</dbReference>
<dbReference type="NCBIfam" id="TIGR01169">
    <property type="entry name" value="rplA_bact"/>
    <property type="match status" value="1"/>
</dbReference>
<dbReference type="PANTHER" id="PTHR36427">
    <property type="entry name" value="54S RIBOSOMAL PROTEIN L1, MITOCHONDRIAL"/>
    <property type="match status" value="1"/>
</dbReference>
<dbReference type="PANTHER" id="PTHR36427:SF3">
    <property type="entry name" value="LARGE RIBOSOMAL SUBUNIT PROTEIN UL1M"/>
    <property type="match status" value="1"/>
</dbReference>
<dbReference type="Pfam" id="PF00687">
    <property type="entry name" value="Ribosomal_L1"/>
    <property type="match status" value="1"/>
</dbReference>
<dbReference type="PIRSF" id="PIRSF002155">
    <property type="entry name" value="Ribosomal_L1"/>
    <property type="match status" value="1"/>
</dbReference>
<dbReference type="SUPFAM" id="SSF56808">
    <property type="entry name" value="Ribosomal protein L1"/>
    <property type="match status" value="1"/>
</dbReference>
<dbReference type="PROSITE" id="PS01199">
    <property type="entry name" value="RIBOSOMAL_L1"/>
    <property type="match status" value="1"/>
</dbReference>
<name>RL1_ECO27</name>